<gene>
    <name type="primary">norG</name>
    <name type="ordered locus">SAB0047</name>
</gene>
<proteinExistence type="inferred from homology"/>
<comment type="function">
    <text evidence="1">Positively regulates the expression of the NorB efflux pump and negatively regulates the expression of the AbcA efflux pump. Binds specifically to the promoters of norA, norB and norC and abcA genes. Could also have an aminotransferase activity (By similarity).</text>
</comment>
<comment type="cofactor">
    <cofactor evidence="3">
        <name>pyridoxal 5'-phosphate</name>
        <dbReference type="ChEBI" id="CHEBI:597326"/>
    </cofactor>
</comment>
<comment type="similarity">
    <text evidence="3">In the C-terminal section; belongs to the class-I pyridoxal-phosphate-dependent aminotransferase family.</text>
</comment>
<comment type="sequence caution" evidence="3">
    <conflict type="erroneous initiation">
        <sequence resource="EMBL-CDS" id="CAI79735"/>
    </conflict>
</comment>
<sequence length="442" mass="51179">MKIPSQRQLAIQYNVNRVTIIKSIELLEAEGFIYTKVGSGTYVNDYLNEAHITNKWSEMMLWSSRQRSQYTVQLINKIETDASYIHISKGELGQPLMPHIQLKKAMSNTASHIEDLSFGYNNGYGYIKLRDIIVERMSKQGINVGRENVMITSGALHAIQLLSIGFLGQDAIIISNTPSYIHSTNVFEQLNFRHIDAPYNQINEINTIIDRFINFKNKALYIEPRFNNPTGCSLTNEQKQNIITYSERHNIPIIEDDIFRDIFFSDPTPAIKTFDKLGKVIHISSFSKTIAPAIRIGWIVASEKIIEQLADVRMQIDYGSSILSQMVVYEMLKNKSYDKHLVKLRYVLKDKRDFMLNILNNLFKDIAHWEVSSGGYFVWLVFKIDIDIKYLFYELLSKEKILINPGYIYGSKEKSIRLSFAFESNENIKHALYKIYTYVKKV</sequence>
<reference key="1">
    <citation type="journal article" date="2007" name="PLoS ONE">
        <title>Molecular correlates of host specialization in Staphylococcus aureus.</title>
        <authorList>
            <person name="Herron-Olson L."/>
            <person name="Fitzgerald J.R."/>
            <person name="Musser J.M."/>
            <person name="Kapur V."/>
        </authorList>
    </citation>
    <scope>NUCLEOTIDE SEQUENCE [LARGE SCALE GENOMIC DNA]</scope>
    <source>
        <strain>bovine RF122 / ET3-1</strain>
    </source>
</reference>
<organism>
    <name type="scientific">Staphylococcus aureus (strain bovine RF122 / ET3-1)</name>
    <dbReference type="NCBI Taxonomy" id="273036"/>
    <lineage>
        <taxon>Bacteria</taxon>
        <taxon>Bacillati</taxon>
        <taxon>Bacillota</taxon>
        <taxon>Bacilli</taxon>
        <taxon>Bacillales</taxon>
        <taxon>Staphylococcaceae</taxon>
        <taxon>Staphylococcus</taxon>
    </lineage>
</organism>
<dbReference type="EMBL" id="AJ938182">
    <property type="protein sequence ID" value="CAI79735.1"/>
    <property type="status" value="ALT_INIT"/>
    <property type="molecule type" value="Genomic_DNA"/>
</dbReference>
<dbReference type="SMR" id="Q2YUS3"/>
<dbReference type="KEGG" id="sab:SAB0047"/>
<dbReference type="HOGENOM" id="CLU_017584_0_0_9"/>
<dbReference type="GO" id="GO:0003677">
    <property type="term" value="F:DNA binding"/>
    <property type="evidence" value="ECO:0007669"/>
    <property type="project" value="UniProtKB-KW"/>
</dbReference>
<dbReference type="GO" id="GO:0003700">
    <property type="term" value="F:DNA-binding transcription factor activity"/>
    <property type="evidence" value="ECO:0007669"/>
    <property type="project" value="InterPro"/>
</dbReference>
<dbReference type="GO" id="GO:0030170">
    <property type="term" value="F:pyridoxal phosphate binding"/>
    <property type="evidence" value="ECO:0007669"/>
    <property type="project" value="InterPro"/>
</dbReference>
<dbReference type="GO" id="GO:0008483">
    <property type="term" value="F:transaminase activity"/>
    <property type="evidence" value="ECO:0007669"/>
    <property type="project" value="UniProtKB-KW"/>
</dbReference>
<dbReference type="GO" id="GO:1901605">
    <property type="term" value="P:alpha-amino acid metabolic process"/>
    <property type="evidence" value="ECO:0007669"/>
    <property type="project" value="TreeGrafter"/>
</dbReference>
<dbReference type="GO" id="GO:0009058">
    <property type="term" value="P:biosynthetic process"/>
    <property type="evidence" value="ECO:0007669"/>
    <property type="project" value="InterPro"/>
</dbReference>
<dbReference type="CDD" id="cd00609">
    <property type="entry name" value="AAT_like"/>
    <property type="match status" value="1"/>
</dbReference>
<dbReference type="CDD" id="cd07377">
    <property type="entry name" value="WHTH_GntR"/>
    <property type="match status" value="1"/>
</dbReference>
<dbReference type="Gene3D" id="3.90.1150.10">
    <property type="entry name" value="Aspartate Aminotransferase, domain 1"/>
    <property type="match status" value="1"/>
</dbReference>
<dbReference type="Gene3D" id="3.40.640.10">
    <property type="entry name" value="Type I PLP-dependent aspartate aminotransferase-like (Major domain)"/>
    <property type="match status" value="1"/>
</dbReference>
<dbReference type="Gene3D" id="1.10.10.10">
    <property type="entry name" value="Winged helix-like DNA-binding domain superfamily/Winged helix DNA-binding domain"/>
    <property type="match status" value="1"/>
</dbReference>
<dbReference type="InterPro" id="IPR004839">
    <property type="entry name" value="Aminotransferase_I/II_large"/>
</dbReference>
<dbReference type="InterPro" id="IPR050859">
    <property type="entry name" value="Class-I_PLP-dep_aminotransf"/>
</dbReference>
<dbReference type="InterPro" id="IPR015424">
    <property type="entry name" value="PyrdxlP-dep_Trfase"/>
</dbReference>
<dbReference type="InterPro" id="IPR015421">
    <property type="entry name" value="PyrdxlP-dep_Trfase_major"/>
</dbReference>
<dbReference type="InterPro" id="IPR015422">
    <property type="entry name" value="PyrdxlP-dep_Trfase_small"/>
</dbReference>
<dbReference type="InterPro" id="IPR000524">
    <property type="entry name" value="Tscrpt_reg_HTH_GntR"/>
</dbReference>
<dbReference type="InterPro" id="IPR036388">
    <property type="entry name" value="WH-like_DNA-bd_sf"/>
</dbReference>
<dbReference type="InterPro" id="IPR036390">
    <property type="entry name" value="WH_DNA-bd_sf"/>
</dbReference>
<dbReference type="PANTHER" id="PTHR42790">
    <property type="entry name" value="AMINOTRANSFERASE"/>
    <property type="match status" value="1"/>
</dbReference>
<dbReference type="PANTHER" id="PTHR42790:SF19">
    <property type="entry name" value="KYNURENINE_ALPHA-AMINOADIPATE AMINOTRANSFERASE, MITOCHONDRIAL"/>
    <property type="match status" value="1"/>
</dbReference>
<dbReference type="Pfam" id="PF00155">
    <property type="entry name" value="Aminotran_1_2"/>
    <property type="match status" value="1"/>
</dbReference>
<dbReference type="Pfam" id="PF00392">
    <property type="entry name" value="GntR"/>
    <property type="match status" value="1"/>
</dbReference>
<dbReference type="PRINTS" id="PR00035">
    <property type="entry name" value="HTHGNTR"/>
</dbReference>
<dbReference type="SMART" id="SM00345">
    <property type="entry name" value="HTH_GNTR"/>
    <property type="match status" value="1"/>
</dbReference>
<dbReference type="SUPFAM" id="SSF53383">
    <property type="entry name" value="PLP-dependent transferases"/>
    <property type="match status" value="1"/>
</dbReference>
<dbReference type="SUPFAM" id="SSF46785">
    <property type="entry name" value="Winged helix' DNA-binding domain"/>
    <property type="match status" value="1"/>
</dbReference>
<dbReference type="PROSITE" id="PS50949">
    <property type="entry name" value="HTH_GNTR"/>
    <property type="match status" value="1"/>
</dbReference>
<evidence type="ECO:0000250" key="1"/>
<evidence type="ECO:0000255" key="2">
    <source>
        <dbReference type="PROSITE-ProRule" id="PRU00307"/>
    </source>
</evidence>
<evidence type="ECO:0000305" key="3"/>
<accession>Q2YUS3</accession>
<protein>
    <recommendedName>
        <fullName>HTH-type transcriptional regulator NorG</fullName>
    </recommendedName>
</protein>
<keyword id="KW-0010">Activator</keyword>
<keyword id="KW-0032">Aminotransferase</keyword>
<keyword id="KW-0238">DNA-binding</keyword>
<keyword id="KW-0663">Pyridoxal phosphate</keyword>
<keyword id="KW-0678">Repressor</keyword>
<keyword id="KW-0804">Transcription</keyword>
<keyword id="KW-0805">Transcription regulation</keyword>
<keyword id="KW-0808">Transferase</keyword>
<name>NORG_STAAB</name>
<feature type="initiator methionine" description="Removed" evidence="1">
    <location>
        <position position="1"/>
    </location>
</feature>
<feature type="chain" id="PRO_0000305319" description="HTH-type transcriptional regulator NorG">
    <location>
        <begin position="2"/>
        <end position="442"/>
    </location>
</feature>
<feature type="domain" description="HTH gntR-type" evidence="2">
    <location>
        <begin position="2"/>
        <end position="46"/>
    </location>
</feature>
<feature type="DNA-binding region" description="H-T-H motif" evidence="2">
    <location>
        <begin position="6"/>
        <end position="25"/>
    </location>
</feature>
<feature type="modified residue" description="N6-(pyridoxal phosphate)lysine" evidence="1">
    <location>
        <position position="288"/>
    </location>
</feature>